<organism>
    <name type="scientific">Pseudomonas aeruginosa (strain UCBPP-PA14)</name>
    <dbReference type="NCBI Taxonomy" id="208963"/>
    <lineage>
        <taxon>Bacteria</taxon>
        <taxon>Pseudomonadati</taxon>
        <taxon>Pseudomonadota</taxon>
        <taxon>Gammaproteobacteria</taxon>
        <taxon>Pseudomonadales</taxon>
        <taxon>Pseudomonadaceae</taxon>
        <taxon>Pseudomonas</taxon>
    </lineage>
</organism>
<dbReference type="EC" id="2.7.1.71" evidence="1"/>
<dbReference type="EMBL" id="CP000438">
    <property type="protein sequence ID" value="ABJ14423.1"/>
    <property type="molecule type" value="Genomic_DNA"/>
</dbReference>
<dbReference type="RefSeq" id="WP_003095833.1">
    <property type="nucleotide sequence ID" value="NZ_CP034244.1"/>
</dbReference>
<dbReference type="SMR" id="Q02EX8"/>
<dbReference type="KEGG" id="pau:PA14_66610"/>
<dbReference type="PseudoCAP" id="PA14_66610"/>
<dbReference type="HOGENOM" id="CLU_057607_2_2_6"/>
<dbReference type="BioCyc" id="PAER208963:G1G74-5619-MONOMER"/>
<dbReference type="UniPathway" id="UPA00053">
    <property type="reaction ID" value="UER00088"/>
</dbReference>
<dbReference type="Proteomes" id="UP000000653">
    <property type="component" value="Chromosome"/>
</dbReference>
<dbReference type="GO" id="GO:0005829">
    <property type="term" value="C:cytosol"/>
    <property type="evidence" value="ECO:0007669"/>
    <property type="project" value="TreeGrafter"/>
</dbReference>
<dbReference type="GO" id="GO:0005524">
    <property type="term" value="F:ATP binding"/>
    <property type="evidence" value="ECO:0007669"/>
    <property type="project" value="UniProtKB-UniRule"/>
</dbReference>
<dbReference type="GO" id="GO:0000287">
    <property type="term" value="F:magnesium ion binding"/>
    <property type="evidence" value="ECO:0007669"/>
    <property type="project" value="UniProtKB-UniRule"/>
</dbReference>
<dbReference type="GO" id="GO:0004765">
    <property type="term" value="F:shikimate kinase activity"/>
    <property type="evidence" value="ECO:0007669"/>
    <property type="project" value="UniProtKB-UniRule"/>
</dbReference>
<dbReference type="GO" id="GO:0008652">
    <property type="term" value="P:amino acid biosynthetic process"/>
    <property type="evidence" value="ECO:0007669"/>
    <property type="project" value="UniProtKB-KW"/>
</dbReference>
<dbReference type="GO" id="GO:0009073">
    <property type="term" value="P:aromatic amino acid family biosynthetic process"/>
    <property type="evidence" value="ECO:0007669"/>
    <property type="project" value="UniProtKB-KW"/>
</dbReference>
<dbReference type="GO" id="GO:0009423">
    <property type="term" value="P:chorismate biosynthetic process"/>
    <property type="evidence" value="ECO:0007669"/>
    <property type="project" value="UniProtKB-UniRule"/>
</dbReference>
<dbReference type="CDD" id="cd00464">
    <property type="entry name" value="SK"/>
    <property type="match status" value="1"/>
</dbReference>
<dbReference type="Gene3D" id="3.40.50.300">
    <property type="entry name" value="P-loop containing nucleotide triphosphate hydrolases"/>
    <property type="match status" value="1"/>
</dbReference>
<dbReference type="HAMAP" id="MF_00109">
    <property type="entry name" value="Shikimate_kinase"/>
    <property type="match status" value="1"/>
</dbReference>
<dbReference type="InterPro" id="IPR027417">
    <property type="entry name" value="P-loop_NTPase"/>
</dbReference>
<dbReference type="InterPro" id="IPR031322">
    <property type="entry name" value="Shikimate/glucono_kinase"/>
</dbReference>
<dbReference type="InterPro" id="IPR000623">
    <property type="entry name" value="Shikimate_kinase/TSH1"/>
</dbReference>
<dbReference type="InterPro" id="IPR023000">
    <property type="entry name" value="Shikimate_kinase_CS"/>
</dbReference>
<dbReference type="NCBIfam" id="NF003456">
    <property type="entry name" value="PRK05057.1"/>
    <property type="match status" value="1"/>
</dbReference>
<dbReference type="PANTHER" id="PTHR21087">
    <property type="entry name" value="SHIKIMATE KINASE"/>
    <property type="match status" value="1"/>
</dbReference>
<dbReference type="PANTHER" id="PTHR21087:SF16">
    <property type="entry name" value="SHIKIMATE KINASE 1, CHLOROPLASTIC"/>
    <property type="match status" value="1"/>
</dbReference>
<dbReference type="Pfam" id="PF01202">
    <property type="entry name" value="SKI"/>
    <property type="match status" value="1"/>
</dbReference>
<dbReference type="PRINTS" id="PR01100">
    <property type="entry name" value="SHIKIMTKNASE"/>
</dbReference>
<dbReference type="SUPFAM" id="SSF52540">
    <property type="entry name" value="P-loop containing nucleoside triphosphate hydrolases"/>
    <property type="match status" value="1"/>
</dbReference>
<dbReference type="PROSITE" id="PS01128">
    <property type="entry name" value="SHIKIMATE_KINASE"/>
    <property type="match status" value="1"/>
</dbReference>
<sequence length="172" mass="19237">MVNLILVGPMGAGKSTIGRLLAKELHLAFKDSDKEIEQRCGANIPWIFDVEGEVGFREREQAMLTELCAADGMVIATGGGAVMRDGNRQVLRAGGRVVYLHASVEHQIARTARDRNRPLLQKPNPGQILRDLMALRDPLYREIADVVVETDERPPRLVVQEILERLRKLPPR</sequence>
<evidence type="ECO:0000255" key="1">
    <source>
        <dbReference type="HAMAP-Rule" id="MF_00109"/>
    </source>
</evidence>
<accession>Q02EX8</accession>
<feature type="chain" id="PRO_1000022986" description="Shikimate kinase">
    <location>
        <begin position="1"/>
        <end position="172"/>
    </location>
</feature>
<feature type="binding site" evidence="1">
    <location>
        <begin position="11"/>
        <end position="16"/>
    </location>
    <ligand>
        <name>ATP</name>
        <dbReference type="ChEBI" id="CHEBI:30616"/>
    </ligand>
</feature>
<feature type="binding site" evidence="1">
    <location>
        <position position="15"/>
    </location>
    <ligand>
        <name>Mg(2+)</name>
        <dbReference type="ChEBI" id="CHEBI:18420"/>
    </ligand>
</feature>
<feature type="binding site" evidence="1">
    <location>
        <position position="33"/>
    </location>
    <ligand>
        <name>substrate</name>
    </ligand>
</feature>
<feature type="binding site" evidence="1">
    <location>
        <position position="57"/>
    </location>
    <ligand>
        <name>substrate</name>
    </ligand>
</feature>
<feature type="binding site" evidence="1">
    <location>
        <position position="79"/>
    </location>
    <ligand>
        <name>substrate</name>
    </ligand>
</feature>
<feature type="binding site" evidence="1">
    <location>
        <position position="117"/>
    </location>
    <ligand>
        <name>ATP</name>
        <dbReference type="ChEBI" id="CHEBI:30616"/>
    </ligand>
</feature>
<feature type="binding site" evidence="1">
    <location>
        <position position="136"/>
    </location>
    <ligand>
        <name>substrate</name>
    </ligand>
</feature>
<feature type="binding site" evidence="1">
    <location>
        <position position="153"/>
    </location>
    <ligand>
        <name>ATP</name>
        <dbReference type="ChEBI" id="CHEBI:30616"/>
    </ligand>
</feature>
<name>AROK_PSEAB</name>
<reference key="1">
    <citation type="journal article" date="2006" name="Genome Biol.">
        <title>Genomic analysis reveals that Pseudomonas aeruginosa virulence is combinatorial.</title>
        <authorList>
            <person name="Lee D.G."/>
            <person name="Urbach J.M."/>
            <person name="Wu G."/>
            <person name="Liberati N.T."/>
            <person name="Feinbaum R.L."/>
            <person name="Miyata S."/>
            <person name="Diggins L.T."/>
            <person name="He J."/>
            <person name="Saucier M."/>
            <person name="Deziel E."/>
            <person name="Friedman L."/>
            <person name="Li L."/>
            <person name="Grills G."/>
            <person name="Montgomery K."/>
            <person name="Kucherlapati R."/>
            <person name="Rahme L.G."/>
            <person name="Ausubel F.M."/>
        </authorList>
    </citation>
    <scope>NUCLEOTIDE SEQUENCE [LARGE SCALE GENOMIC DNA]</scope>
    <source>
        <strain>UCBPP-PA14</strain>
    </source>
</reference>
<comment type="function">
    <text evidence="1">Catalyzes the specific phosphorylation of the 3-hydroxyl group of shikimic acid using ATP as a cosubstrate.</text>
</comment>
<comment type="catalytic activity">
    <reaction evidence="1">
        <text>shikimate + ATP = 3-phosphoshikimate + ADP + H(+)</text>
        <dbReference type="Rhea" id="RHEA:13121"/>
        <dbReference type="ChEBI" id="CHEBI:15378"/>
        <dbReference type="ChEBI" id="CHEBI:30616"/>
        <dbReference type="ChEBI" id="CHEBI:36208"/>
        <dbReference type="ChEBI" id="CHEBI:145989"/>
        <dbReference type="ChEBI" id="CHEBI:456216"/>
        <dbReference type="EC" id="2.7.1.71"/>
    </reaction>
</comment>
<comment type="cofactor">
    <cofactor evidence="1">
        <name>Mg(2+)</name>
        <dbReference type="ChEBI" id="CHEBI:18420"/>
    </cofactor>
    <text evidence="1">Binds 1 Mg(2+) ion per subunit.</text>
</comment>
<comment type="pathway">
    <text evidence="1">Metabolic intermediate biosynthesis; chorismate biosynthesis; chorismate from D-erythrose 4-phosphate and phosphoenolpyruvate: step 5/7.</text>
</comment>
<comment type="subunit">
    <text evidence="1">Monomer.</text>
</comment>
<comment type="subcellular location">
    <subcellularLocation>
        <location evidence="1">Cytoplasm</location>
    </subcellularLocation>
</comment>
<comment type="similarity">
    <text evidence="1">Belongs to the shikimate kinase family.</text>
</comment>
<protein>
    <recommendedName>
        <fullName evidence="1">Shikimate kinase</fullName>
        <shortName evidence="1">SK</shortName>
        <ecNumber evidence="1">2.7.1.71</ecNumber>
    </recommendedName>
</protein>
<keyword id="KW-0028">Amino-acid biosynthesis</keyword>
<keyword id="KW-0057">Aromatic amino acid biosynthesis</keyword>
<keyword id="KW-0067">ATP-binding</keyword>
<keyword id="KW-0963">Cytoplasm</keyword>
<keyword id="KW-0418">Kinase</keyword>
<keyword id="KW-0460">Magnesium</keyword>
<keyword id="KW-0479">Metal-binding</keyword>
<keyword id="KW-0547">Nucleotide-binding</keyword>
<keyword id="KW-0808">Transferase</keyword>
<proteinExistence type="inferred from homology"/>
<gene>
    <name evidence="1" type="primary">aroK</name>
    <name type="ordered locus">PA14_66610</name>
</gene>